<name>RNY_CHLPD</name>
<evidence type="ECO:0000255" key="1">
    <source>
        <dbReference type="HAMAP-Rule" id="MF_00335"/>
    </source>
</evidence>
<evidence type="ECO:0000255" key="2">
    <source>
        <dbReference type="PROSITE-ProRule" id="PRU01175"/>
    </source>
</evidence>
<keyword id="KW-1003">Cell membrane</keyword>
<keyword id="KW-0255">Endonuclease</keyword>
<keyword id="KW-0378">Hydrolase</keyword>
<keyword id="KW-0472">Membrane</keyword>
<keyword id="KW-0540">Nuclease</keyword>
<keyword id="KW-1185">Reference proteome</keyword>
<keyword id="KW-0694">RNA-binding</keyword>
<keyword id="KW-0812">Transmembrane</keyword>
<keyword id="KW-1133">Transmembrane helix</keyword>
<dbReference type="EC" id="3.1.-.-" evidence="1"/>
<dbReference type="EMBL" id="CP000492">
    <property type="protein sequence ID" value="ABL64976.1"/>
    <property type="molecule type" value="Genomic_DNA"/>
</dbReference>
<dbReference type="RefSeq" id="WP_011744803.1">
    <property type="nucleotide sequence ID" value="NC_008639.1"/>
</dbReference>
<dbReference type="STRING" id="290317.Cpha266_0928"/>
<dbReference type="KEGG" id="cph:Cpha266_0928"/>
<dbReference type="eggNOG" id="COG1418">
    <property type="taxonomic scope" value="Bacteria"/>
</dbReference>
<dbReference type="HOGENOM" id="CLU_028328_1_0_10"/>
<dbReference type="OrthoDB" id="9803205at2"/>
<dbReference type="Proteomes" id="UP000008701">
    <property type="component" value="Chromosome"/>
</dbReference>
<dbReference type="GO" id="GO:0005886">
    <property type="term" value="C:plasma membrane"/>
    <property type="evidence" value="ECO:0007669"/>
    <property type="project" value="UniProtKB-SubCell"/>
</dbReference>
<dbReference type="GO" id="GO:0003723">
    <property type="term" value="F:RNA binding"/>
    <property type="evidence" value="ECO:0007669"/>
    <property type="project" value="UniProtKB-UniRule"/>
</dbReference>
<dbReference type="GO" id="GO:0004521">
    <property type="term" value="F:RNA endonuclease activity"/>
    <property type="evidence" value="ECO:0007669"/>
    <property type="project" value="UniProtKB-UniRule"/>
</dbReference>
<dbReference type="GO" id="GO:0006402">
    <property type="term" value="P:mRNA catabolic process"/>
    <property type="evidence" value="ECO:0007669"/>
    <property type="project" value="UniProtKB-UniRule"/>
</dbReference>
<dbReference type="CDD" id="cd00077">
    <property type="entry name" value="HDc"/>
    <property type="match status" value="1"/>
</dbReference>
<dbReference type="CDD" id="cd22431">
    <property type="entry name" value="KH-I_RNaseY"/>
    <property type="match status" value="1"/>
</dbReference>
<dbReference type="Gene3D" id="1.10.3210.10">
    <property type="entry name" value="Hypothetical protein af1432"/>
    <property type="match status" value="1"/>
</dbReference>
<dbReference type="Gene3D" id="3.30.1370.10">
    <property type="entry name" value="K Homology domain, type 1"/>
    <property type="match status" value="1"/>
</dbReference>
<dbReference type="HAMAP" id="MF_00335">
    <property type="entry name" value="RNase_Y"/>
    <property type="match status" value="1"/>
</dbReference>
<dbReference type="InterPro" id="IPR003607">
    <property type="entry name" value="HD/PDEase_dom"/>
</dbReference>
<dbReference type="InterPro" id="IPR006674">
    <property type="entry name" value="HD_domain"/>
</dbReference>
<dbReference type="InterPro" id="IPR006675">
    <property type="entry name" value="HDIG_dom"/>
</dbReference>
<dbReference type="InterPro" id="IPR004087">
    <property type="entry name" value="KH_dom"/>
</dbReference>
<dbReference type="InterPro" id="IPR004088">
    <property type="entry name" value="KH_dom_type_1"/>
</dbReference>
<dbReference type="InterPro" id="IPR036612">
    <property type="entry name" value="KH_dom_type_1_sf"/>
</dbReference>
<dbReference type="InterPro" id="IPR017705">
    <property type="entry name" value="Ribonuclease_Y"/>
</dbReference>
<dbReference type="InterPro" id="IPR022711">
    <property type="entry name" value="RNase_Y_N"/>
</dbReference>
<dbReference type="NCBIfam" id="TIGR00277">
    <property type="entry name" value="HDIG"/>
    <property type="match status" value="1"/>
</dbReference>
<dbReference type="NCBIfam" id="TIGR03319">
    <property type="entry name" value="RNase_Y"/>
    <property type="match status" value="1"/>
</dbReference>
<dbReference type="PANTHER" id="PTHR12826">
    <property type="entry name" value="RIBONUCLEASE Y"/>
    <property type="match status" value="1"/>
</dbReference>
<dbReference type="PANTHER" id="PTHR12826:SF15">
    <property type="entry name" value="RIBONUCLEASE Y"/>
    <property type="match status" value="1"/>
</dbReference>
<dbReference type="Pfam" id="PF01966">
    <property type="entry name" value="HD"/>
    <property type="match status" value="1"/>
</dbReference>
<dbReference type="Pfam" id="PF00013">
    <property type="entry name" value="KH_1"/>
    <property type="match status" value="1"/>
</dbReference>
<dbReference type="Pfam" id="PF12072">
    <property type="entry name" value="RNase_Y_N"/>
    <property type="match status" value="1"/>
</dbReference>
<dbReference type="SMART" id="SM00471">
    <property type="entry name" value="HDc"/>
    <property type="match status" value="1"/>
</dbReference>
<dbReference type="SMART" id="SM00322">
    <property type="entry name" value="KH"/>
    <property type="match status" value="1"/>
</dbReference>
<dbReference type="SUPFAM" id="SSF54791">
    <property type="entry name" value="Eukaryotic type KH-domain (KH-domain type I)"/>
    <property type="match status" value="1"/>
</dbReference>
<dbReference type="SUPFAM" id="SSF109604">
    <property type="entry name" value="HD-domain/PDEase-like"/>
    <property type="match status" value="1"/>
</dbReference>
<dbReference type="PROSITE" id="PS51831">
    <property type="entry name" value="HD"/>
    <property type="match status" value="1"/>
</dbReference>
<dbReference type="PROSITE" id="PS50084">
    <property type="entry name" value="KH_TYPE_1"/>
    <property type="match status" value="1"/>
</dbReference>
<proteinExistence type="inferred from homology"/>
<organism>
    <name type="scientific">Chlorobium phaeobacteroides (strain DSM 266 / SMG 266 / 2430)</name>
    <dbReference type="NCBI Taxonomy" id="290317"/>
    <lineage>
        <taxon>Bacteria</taxon>
        <taxon>Pseudomonadati</taxon>
        <taxon>Chlorobiota</taxon>
        <taxon>Chlorobiia</taxon>
        <taxon>Chlorobiales</taxon>
        <taxon>Chlorobiaceae</taxon>
        <taxon>Chlorobium/Pelodictyon group</taxon>
        <taxon>Chlorobium</taxon>
    </lineage>
</organism>
<reference key="1">
    <citation type="submission" date="2006-12" db="EMBL/GenBank/DDBJ databases">
        <title>Complete sequence of Chlorobium phaeobacteroides DSM 266.</title>
        <authorList>
            <consortium name="US DOE Joint Genome Institute"/>
            <person name="Copeland A."/>
            <person name="Lucas S."/>
            <person name="Lapidus A."/>
            <person name="Barry K."/>
            <person name="Detter J.C."/>
            <person name="Glavina del Rio T."/>
            <person name="Hammon N."/>
            <person name="Israni S."/>
            <person name="Pitluck S."/>
            <person name="Goltsman E."/>
            <person name="Schmutz J."/>
            <person name="Larimer F."/>
            <person name="Land M."/>
            <person name="Hauser L."/>
            <person name="Mikhailova N."/>
            <person name="Li T."/>
            <person name="Overmann J."/>
            <person name="Bryant D.A."/>
            <person name="Richardson P."/>
        </authorList>
    </citation>
    <scope>NUCLEOTIDE SEQUENCE [LARGE SCALE GENOMIC DNA]</scope>
    <source>
        <strain>DSM 266 / SMG 266 / 2430</strain>
    </source>
</reference>
<feature type="chain" id="PRO_0000344842" description="Ribonuclease Y">
    <location>
        <begin position="1"/>
        <end position="525"/>
    </location>
</feature>
<feature type="transmembrane region" description="Helical" evidence="1">
    <location>
        <begin position="3"/>
        <end position="23"/>
    </location>
</feature>
<feature type="domain" description="KH" evidence="1">
    <location>
        <begin position="215"/>
        <end position="300"/>
    </location>
</feature>
<feature type="domain" description="HD" evidence="2">
    <location>
        <begin position="341"/>
        <end position="433"/>
    </location>
</feature>
<protein>
    <recommendedName>
        <fullName evidence="1">Ribonuclease Y</fullName>
        <shortName evidence="1">RNase Y</shortName>
        <ecNumber evidence="1">3.1.-.-</ecNumber>
    </recommendedName>
</protein>
<gene>
    <name evidence="1" type="primary">rny</name>
    <name type="ordered locus">Cpha266_0928</name>
</gene>
<comment type="function">
    <text evidence="1">Endoribonuclease that initiates mRNA decay.</text>
</comment>
<comment type="subcellular location">
    <subcellularLocation>
        <location evidence="1">Cell membrane</location>
        <topology evidence="1">Single-pass membrane protein</topology>
    </subcellularLocation>
</comment>
<comment type="similarity">
    <text evidence="1">Belongs to the RNase Y family.</text>
</comment>
<sequence>MGIFFISLVLIVLASVVFFVGGFFLGRYFLERIGTTKILEAEERAVQIVQEAQKEANEYKELKVSEVNQEWKKKRREFDQEVVIKNNKFNQMQKQVLQKEGQLKKQSQDLRDMERKLQDQRKEIEQTMETVNLRSSELERITLEQNQRLESISNLQADEARQMLVDNMLAKAREEATETIHQIHEEAEQQAERLAEKTLLTAIQRISFEQATENALSVVHIQSDELKGRIIGREGRNIKAFENATGVDIIVDDTPEVVILSCFDPLRRELAKLTLQKLLVDGIIHPVAIEKAYEDAKKEIDDVIMSAGEETISSLQIPDMPAEVVGLIGKMKYHTVYGQNLLQHSREVAMLAGLMASELKLDARVAKRAALLHDIGLVLPESDEPHAIAGRNFLKKFNESAVVLNAVAAHHGDVVKESPIAELVDAANVISLSRPGARGAVTADGNVKRLESLEEIAKGFPGVLKTYALQAGREIRVIVEGDNVSDSQADVLAHDIARKIESEVQYPGQIKVSIIRERRSIAYAK</sequence>
<accession>A1BEZ9</accession>